<evidence type="ECO:0000255" key="1">
    <source>
        <dbReference type="HAMAP-Rule" id="MF_00563"/>
    </source>
</evidence>
<organism>
    <name type="scientific">Streptomyces avermitilis (strain ATCC 31267 / DSM 46492 / JCM 5070 / NBRC 14893 / NCIMB 12804 / NRRL 8165 / MA-4680)</name>
    <dbReference type="NCBI Taxonomy" id="227882"/>
    <lineage>
        <taxon>Bacteria</taxon>
        <taxon>Bacillati</taxon>
        <taxon>Actinomycetota</taxon>
        <taxon>Actinomycetes</taxon>
        <taxon>Kitasatosporales</taxon>
        <taxon>Streptomycetaceae</taxon>
        <taxon>Streptomyces</taxon>
    </lineage>
</organism>
<protein>
    <recommendedName>
        <fullName evidence="1">Adenosylhomocysteinase</fullName>
        <ecNumber evidence="1">3.13.2.1</ecNumber>
    </recommendedName>
    <alternativeName>
        <fullName evidence="1">S-adenosyl-L-homocysteine hydrolase</fullName>
        <shortName evidence="1">AdoHcyase</shortName>
    </alternativeName>
</protein>
<dbReference type="EC" id="3.13.2.1" evidence="1"/>
<dbReference type="EMBL" id="BA000030">
    <property type="protein sequence ID" value="BAC72765.1"/>
    <property type="molecule type" value="Genomic_DNA"/>
</dbReference>
<dbReference type="RefSeq" id="WP_010986458.1">
    <property type="nucleotide sequence ID" value="NZ_JZJK01000077.1"/>
</dbReference>
<dbReference type="SMR" id="Q82DC9"/>
<dbReference type="GeneID" id="41542133"/>
<dbReference type="KEGG" id="sma:SAVERM_5053"/>
<dbReference type="eggNOG" id="COG0499">
    <property type="taxonomic scope" value="Bacteria"/>
</dbReference>
<dbReference type="HOGENOM" id="CLU_025194_2_1_11"/>
<dbReference type="OrthoDB" id="9802717at2"/>
<dbReference type="UniPathway" id="UPA00314">
    <property type="reaction ID" value="UER00076"/>
</dbReference>
<dbReference type="Proteomes" id="UP000000428">
    <property type="component" value="Chromosome"/>
</dbReference>
<dbReference type="GO" id="GO:0005829">
    <property type="term" value="C:cytosol"/>
    <property type="evidence" value="ECO:0007669"/>
    <property type="project" value="TreeGrafter"/>
</dbReference>
<dbReference type="GO" id="GO:0004013">
    <property type="term" value="F:adenosylhomocysteinase activity"/>
    <property type="evidence" value="ECO:0007669"/>
    <property type="project" value="UniProtKB-UniRule"/>
</dbReference>
<dbReference type="GO" id="GO:0071269">
    <property type="term" value="P:L-homocysteine biosynthetic process"/>
    <property type="evidence" value="ECO:0007669"/>
    <property type="project" value="UniProtKB-UniRule"/>
</dbReference>
<dbReference type="GO" id="GO:0006730">
    <property type="term" value="P:one-carbon metabolic process"/>
    <property type="evidence" value="ECO:0007669"/>
    <property type="project" value="UniProtKB-KW"/>
</dbReference>
<dbReference type="GO" id="GO:0033353">
    <property type="term" value="P:S-adenosylmethionine cycle"/>
    <property type="evidence" value="ECO:0007669"/>
    <property type="project" value="TreeGrafter"/>
</dbReference>
<dbReference type="CDD" id="cd00401">
    <property type="entry name" value="SAHH"/>
    <property type="match status" value="1"/>
</dbReference>
<dbReference type="FunFam" id="3.40.50.720:FF:000004">
    <property type="entry name" value="Adenosylhomocysteinase"/>
    <property type="match status" value="1"/>
</dbReference>
<dbReference type="Gene3D" id="3.40.50.1480">
    <property type="entry name" value="Adenosylhomocysteinase-like"/>
    <property type="match status" value="1"/>
</dbReference>
<dbReference type="Gene3D" id="3.40.50.720">
    <property type="entry name" value="NAD(P)-binding Rossmann-like Domain"/>
    <property type="match status" value="1"/>
</dbReference>
<dbReference type="HAMAP" id="MF_00563">
    <property type="entry name" value="AdoHcyase"/>
    <property type="match status" value="1"/>
</dbReference>
<dbReference type="InterPro" id="IPR042172">
    <property type="entry name" value="Adenosylhomocyst_ase-like_sf"/>
</dbReference>
<dbReference type="InterPro" id="IPR000043">
    <property type="entry name" value="Adenosylhomocysteinase-like"/>
</dbReference>
<dbReference type="InterPro" id="IPR015878">
    <property type="entry name" value="Ado_hCys_hydrolase_NAD-bd"/>
</dbReference>
<dbReference type="InterPro" id="IPR036291">
    <property type="entry name" value="NAD(P)-bd_dom_sf"/>
</dbReference>
<dbReference type="InterPro" id="IPR020082">
    <property type="entry name" value="S-Ado-L-homoCys_hydrolase_CS"/>
</dbReference>
<dbReference type="NCBIfam" id="TIGR00936">
    <property type="entry name" value="ahcY"/>
    <property type="match status" value="1"/>
</dbReference>
<dbReference type="NCBIfam" id="NF004005">
    <property type="entry name" value="PRK05476.2-3"/>
    <property type="match status" value="1"/>
</dbReference>
<dbReference type="PANTHER" id="PTHR23420">
    <property type="entry name" value="ADENOSYLHOMOCYSTEINASE"/>
    <property type="match status" value="1"/>
</dbReference>
<dbReference type="PANTHER" id="PTHR23420:SF0">
    <property type="entry name" value="ADENOSYLHOMOCYSTEINASE"/>
    <property type="match status" value="1"/>
</dbReference>
<dbReference type="Pfam" id="PF05221">
    <property type="entry name" value="AdoHcyase"/>
    <property type="match status" value="1"/>
</dbReference>
<dbReference type="Pfam" id="PF00670">
    <property type="entry name" value="AdoHcyase_NAD"/>
    <property type="match status" value="1"/>
</dbReference>
<dbReference type="PIRSF" id="PIRSF001109">
    <property type="entry name" value="Ad_hcy_hydrolase"/>
    <property type="match status" value="1"/>
</dbReference>
<dbReference type="SMART" id="SM00996">
    <property type="entry name" value="AdoHcyase"/>
    <property type="match status" value="1"/>
</dbReference>
<dbReference type="SMART" id="SM00997">
    <property type="entry name" value="AdoHcyase_NAD"/>
    <property type="match status" value="1"/>
</dbReference>
<dbReference type="SUPFAM" id="SSF52283">
    <property type="entry name" value="Formate/glycerate dehydrogenase catalytic domain-like"/>
    <property type="match status" value="1"/>
</dbReference>
<dbReference type="SUPFAM" id="SSF51735">
    <property type="entry name" value="NAD(P)-binding Rossmann-fold domains"/>
    <property type="match status" value="1"/>
</dbReference>
<dbReference type="PROSITE" id="PS00738">
    <property type="entry name" value="ADOHCYASE_1"/>
    <property type="match status" value="1"/>
</dbReference>
<dbReference type="PROSITE" id="PS00739">
    <property type="entry name" value="ADOHCYASE_2"/>
    <property type="match status" value="1"/>
</dbReference>
<accession>Q82DC9</accession>
<comment type="function">
    <text evidence="1">May play a key role in the regulation of the intracellular concentration of adenosylhomocysteine.</text>
</comment>
<comment type="catalytic activity">
    <reaction evidence="1">
        <text>S-adenosyl-L-homocysteine + H2O = L-homocysteine + adenosine</text>
        <dbReference type="Rhea" id="RHEA:21708"/>
        <dbReference type="ChEBI" id="CHEBI:15377"/>
        <dbReference type="ChEBI" id="CHEBI:16335"/>
        <dbReference type="ChEBI" id="CHEBI:57856"/>
        <dbReference type="ChEBI" id="CHEBI:58199"/>
        <dbReference type="EC" id="3.13.2.1"/>
    </reaction>
</comment>
<comment type="cofactor">
    <cofactor evidence="1">
        <name>NAD(+)</name>
        <dbReference type="ChEBI" id="CHEBI:57540"/>
    </cofactor>
    <text evidence="1">Binds 1 NAD(+) per subunit.</text>
</comment>
<comment type="pathway">
    <text evidence="1">Amino-acid biosynthesis; L-homocysteine biosynthesis; L-homocysteine from S-adenosyl-L-homocysteine: step 1/1.</text>
</comment>
<comment type="subcellular location">
    <subcellularLocation>
        <location evidence="1">Cytoplasm</location>
    </subcellularLocation>
</comment>
<comment type="similarity">
    <text evidence="1">Belongs to the adenosylhomocysteinase family.</text>
</comment>
<sequence>MTTVDNRQDFKVADLSLAEFGRKEITLAEHEMPGLMSIRKEYAEAQPLAGARVTGSLHMTVQTAVLIETLVALGAEVRWASCNIFSTQDHAAAAIAVGPNGTPDNPQGVPVFAWKGETLEEYWWCTEQALTWPNTPTGGPNMILDDGGDATLLVHKGVEYEKDGKVPSVDTAESDEHRVILELLHRTITDGSQKWTQLASEIRGVTEETTTGVHRLYEMHRDGTLLFPAINVNDAVTKSKFDNKYGCRHSLIDGINRATDVLIGGKTAVVCGYGDVGKGCAESLRGQGARVIVTEIDPICALQAAMDGYQVTTLDEVIDKADIFVTTTGNKDIIMASDMAKMKHQAIVGNIGHFDNEIDMAGLAQIPGIVKDEVKPQVHTWKFPDGKVLIVLSEGRLLNLGNATGHPSFVMSNSFADQTLAQIELFTKPDEYPTDVYVLPKHLDEKVARLHLDSLGVKLTTLRPEQAAYIGVEVEGPFKSDHYRY</sequence>
<keyword id="KW-0963">Cytoplasm</keyword>
<keyword id="KW-0378">Hydrolase</keyword>
<keyword id="KW-0520">NAD</keyword>
<keyword id="KW-0554">One-carbon metabolism</keyword>
<keyword id="KW-1185">Reference proteome</keyword>
<reference key="1">
    <citation type="journal article" date="2001" name="Proc. Natl. Acad. Sci. U.S.A.">
        <title>Genome sequence of an industrial microorganism Streptomyces avermitilis: deducing the ability of producing secondary metabolites.</title>
        <authorList>
            <person name="Omura S."/>
            <person name="Ikeda H."/>
            <person name="Ishikawa J."/>
            <person name="Hanamoto A."/>
            <person name="Takahashi C."/>
            <person name="Shinose M."/>
            <person name="Takahashi Y."/>
            <person name="Horikawa H."/>
            <person name="Nakazawa H."/>
            <person name="Osonoe T."/>
            <person name="Kikuchi H."/>
            <person name="Shiba T."/>
            <person name="Sakaki Y."/>
            <person name="Hattori M."/>
        </authorList>
    </citation>
    <scope>NUCLEOTIDE SEQUENCE [LARGE SCALE GENOMIC DNA]</scope>
    <source>
        <strain>ATCC 31267 / DSM 46492 / JCM 5070 / NBRC 14893 / NCIMB 12804 / NRRL 8165 / MA-4680</strain>
    </source>
</reference>
<reference key="2">
    <citation type="journal article" date="2003" name="Nat. Biotechnol.">
        <title>Complete genome sequence and comparative analysis of the industrial microorganism Streptomyces avermitilis.</title>
        <authorList>
            <person name="Ikeda H."/>
            <person name="Ishikawa J."/>
            <person name="Hanamoto A."/>
            <person name="Shinose M."/>
            <person name="Kikuchi H."/>
            <person name="Shiba T."/>
            <person name="Sakaki Y."/>
            <person name="Hattori M."/>
            <person name="Omura S."/>
        </authorList>
    </citation>
    <scope>NUCLEOTIDE SEQUENCE [LARGE SCALE GENOMIC DNA]</scope>
    <source>
        <strain>ATCC 31267 / DSM 46492 / JCM 5070 / NBRC 14893 / NCIMB 12804 / NRRL 8165 / MA-4680</strain>
    </source>
</reference>
<gene>
    <name evidence="1" type="primary">ahcY</name>
    <name type="synonym">sahH</name>
    <name type="ordered locus">SAV_5053</name>
</gene>
<feature type="chain" id="PRO_0000116989" description="Adenosylhomocysteinase">
    <location>
        <begin position="1"/>
        <end position="485"/>
    </location>
</feature>
<feature type="binding site" evidence="1">
    <location>
        <position position="60"/>
    </location>
    <ligand>
        <name>substrate</name>
    </ligand>
</feature>
<feature type="binding site" evidence="1">
    <location>
        <position position="146"/>
    </location>
    <ligand>
        <name>substrate</name>
    </ligand>
</feature>
<feature type="binding site" evidence="1">
    <location>
        <position position="208"/>
    </location>
    <ligand>
        <name>substrate</name>
    </ligand>
</feature>
<feature type="binding site" evidence="1">
    <location>
        <begin position="209"/>
        <end position="211"/>
    </location>
    <ligand>
        <name>NAD(+)</name>
        <dbReference type="ChEBI" id="CHEBI:57540"/>
    </ligand>
</feature>
<feature type="binding site" evidence="1">
    <location>
        <position position="238"/>
    </location>
    <ligand>
        <name>substrate</name>
    </ligand>
</feature>
<feature type="binding site" evidence="1">
    <location>
        <position position="242"/>
    </location>
    <ligand>
        <name>substrate</name>
    </ligand>
</feature>
<feature type="binding site" evidence="1">
    <location>
        <position position="243"/>
    </location>
    <ligand>
        <name>NAD(+)</name>
        <dbReference type="ChEBI" id="CHEBI:57540"/>
    </ligand>
</feature>
<feature type="binding site" evidence="1">
    <location>
        <begin position="272"/>
        <end position="277"/>
    </location>
    <ligand>
        <name>NAD(+)</name>
        <dbReference type="ChEBI" id="CHEBI:57540"/>
    </ligand>
</feature>
<feature type="binding site" evidence="1">
    <location>
        <position position="295"/>
    </location>
    <ligand>
        <name>NAD(+)</name>
        <dbReference type="ChEBI" id="CHEBI:57540"/>
    </ligand>
</feature>
<feature type="binding site" evidence="1">
    <location>
        <position position="330"/>
    </location>
    <ligand>
        <name>NAD(+)</name>
        <dbReference type="ChEBI" id="CHEBI:57540"/>
    </ligand>
</feature>
<feature type="binding site" evidence="1">
    <location>
        <begin position="351"/>
        <end position="353"/>
    </location>
    <ligand>
        <name>NAD(+)</name>
        <dbReference type="ChEBI" id="CHEBI:57540"/>
    </ligand>
</feature>
<feature type="binding site" evidence="1">
    <location>
        <position position="399"/>
    </location>
    <ligand>
        <name>NAD(+)</name>
        <dbReference type="ChEBI" id="CHEBI:57540"/>
    </ligand>
</feature>
<name>SAHH_STRAW</name>
<proteinExistence type="inferred from homology"/>